<feature type="chain" id="PRO_0000356840" description="Golgi pH regulator homolog">
    <location>
        <begin position="1"/>
        <end position="547"/>
    </location>
</feature>
<feature type="transmembrane region" description="Helical" evidence="1">
    <location>
        <begin position="56"/>
        <end position="76"/>
    </location>
</feature>
<feature type="transmembrane region" description="Helical" evidence="1">
    <location>
        <begin position="92"/>
        <end position="112"/>
    </location>
</feature>
<feature type="transmembrane region" description="Helical" evidence="1">
    <location>
        <begin position="134"/>
        <end position="154"/>
    </location>
</feature>
<feature type="transmembrane region" description="Helical" evidence="1">
    <location>
        <begin position="164"/>
        <end position="184"/>
    </location>
</feature>
<feature type="transmembrane region" description="Helical" evidence="1">
    <location>
        <begin position="200"/>
        <end position="220"/>
    </location>
</feature>
<feature type="transmembrane region" description="Helical" evidence="1">
    <location>
        <begin position="427"/>
        <end position="447"/>
    </location>
</feature>
<feature type="transmembrane region" description="Helical" evidence="1">
    <location>
        <begin position="469"/>
        <end position="489"/>
    </location>
</feature>
<feature type="transmembrane region" description="Helical" evidence="1">
    <location>
        <begin position="517"/>
        <end position="537"/>
    </location>
</feature>
<feature type="region of interest" description="Disordered" evidence="2">
    <location>
        <begin position="268"/>
        <end position="305"/>
    </location>
</feature>
<feature type="glycosylation site" description="N-linked (GlcNAc...) asparagine" evidence="1">
    <location>
        <position position="290"/>
    </location>
</feature>
<feature type="glycosylation site" description="N-linked (GlcNAc...) asparagine" evidence="1">
    <location>
        <position position="299"/>
    </location>
</feature>
<accession>Q54QM5</accession>
<sequence length="547" mass="64245">MDTFTIEEIVKFDGGGGGISTINSNNDNIGIPSNTFEMIISTIQHFLDRSSSVASTIAVFVLSFILFFMFGWFYFLKILFRDYEVKKVFVQLSFSITFALSLTLFELIFFEIMDFMDREWRYRFWEFDLTLMSINLILVLPYYQFYLLVLAYGFSKRKTLFFSLVLLVLYLILFWKIGDPFPILKEYTGLVSLEMGIGRIGIVGCTVMSLLSGYGAVYVPYSYITYFLKPVKDVTITKLEKQFNHALDKIFNKKKRVVLLKRELTRRNVNNNNNNNNNYDTYNYNNNYNNNSNNNNNNNNSNNNNNNNLPIIGPIFSKIYNLWNVGYHHQLSRPIDDIKQLEREIKQLEDLNRDLFTQIHELKLERLRIQFSTTLRGKFYNWLGYFFSIYWKKKSALNIVFDRRGGMDPVTRGLDIALRYFHFQVDVTFWSQHISFILVGLMTASSIRGFLNQILKVFHEYSSSLSSNNIVLILAQVMGMYFISSVLMMRTSMPEIYTRFIVTQILGDIEFSFYHRWFDFIFIPSAIITTLALIFMSKSSTFHLNDE</sequence>
<organism>
    <name type="scientific">Dictyostelium discoideum</name>
    <name type="common">Social amoeba</name>
    <dbReference type="NCBI Taxonomy" id="44689"/>
    <lineage>
        <taxon>Eukaryota</taxon>
        <taxon>Amoebozoa</taxon>
        <taxon>Evosea</taxon>
        <taxon>Eumycetozoa</taxon>
        <taxon>Dictyostelia</taxon>
        <taxon>Dictyosteliales</taxon>
        <taxon>Dictyosteliaceae</taxon>
        <taxon>Dictyostelium</taxon>
    </lineage>
</organism>
<protein>
    <recommendedName>
        <fullName>Golgi pH regulator homolog</fullName>
    </recommendedName>
    <alternativeName>
        <fullName>Protein GPR89</fullName>
    </alternativeName>
</protein>
<evidence type="ECO:0000255" key="1"/>
<evidence type="ECO:0000256" key="2">
    <source>
        <dbReference type="SAM" id="MobiDB-lite"/>
    </source>
</evidence>
<evidence type="ECO:0000305" key="3"/>
<dbReference type="EMBL" id="AAFI02000057">
    <property type="protein sequence ID" value="EAL65542.1"/>
    <property type="molecule type" value="Genomic_DNA"/>
</dbReference>
<dbReference type="RefSeq" id="XP_638846.1">
    <property type="nucleotide sequence ID" value="XM_633754.1"/>
</dbReference>
<dbReference type="SMR" id="Q54QM5"/>
<dbReference type="FunCoup" id="Q54QM5">
    <property type="interactions" value="294"/>
</dbReference>
<dbReference type="STRING" id="44689.Q54QM5"/>
<dbReference type="GlyCosmos" id="Q54QM5">
    <property type="glycosylation" value="2 sites, No reported glycans"/>
</dbReference>
<dbReference type="GlyGen" id="Q54QM5">
    <property type="glycosylation" value="2 sites"/>
</dbReference>
<dbReference type="PaxDb" id="44689-DDB0218522"/>
<dbReference type="EnsemblProtists" id="EAL65542">
    <property type="protein sequence ID" value="EAL65542"/>
    <property type="gene ID" value="DDB_G0283855"/>
</dbReference>
<dbReference type="GeneID" id="8624244"/>
<dbReference type="KEGG" id="ddi:DDB_G0283855"/>
<dbReference type="dictyBase" id="DDB_G0283855">
    <property type="gene designation" value="gpr89"/>
</dbReference>
<dbReference type="VEuPathDB" id="AmoebaDB:DDB_G0283855"/>
<dbReference type="eggNOG" id="KOG2417">
    <property type="taxonomic scope" value="Eukaryota"/>
</dbReference>
<dbReference type="HOGENOM" id="CLU_030540_1_0_1"/>
<dbReference type="InParanoid" id="Q54QM5"/>
<dbReference type="OMA" id="FSVYCVY"/>
<dbReference type="PhylomeDB" id="Q54QM5"/>
<dbReference type="PRO" id="PR:Q54QM5"/>
<dbReference type="Proteomes" id="UP000002195">
    <property type="component" value="Chromosome 4"/>
</dbReference>
<dbReference type="GO" id="GO:0005789">
    <property type="term" value="C:endoplasmic reticulum membrane"/>
    <property type="evidence" value="ECO:0000314"/>
    <property type="project" value="dictyBase"/>
</dbReference>
<dbReference type="GO" id="GO:0000139">
    <property type="term" value="C:Golgi membrane"/>
    <property type="evidence" value="ECO:0000314"/>
    <property type="project" value="dictyBase"/>
</dbReference>
<dbReference type="GO" id="GO:0002020">
    <property type="term" value="F:protease binding"/>
    <property type="evidence" value="ECO:0000353"/>
    <property type="project" value="dictyBase"/>
</dbReference>
<dbReference type="GO" id="GO:0048870">
    <property type="term" value="P:cell motility"/>
    <property type="evidence" value="ECO:0000315"/>
    <property type="project" value="dictyBase"/>
</dbReference>
<dbReference type="GO" id="GO:0048388">
    <property type="term" value="P:endosomal lumen acidification"/>
    <property type="evidence" value="ECO:0000315"/>
    <property type="project" value="dictyBase"/>
</dbReference>
<dbReference type="GO" id="GO:0009306">
    <property type="term" value="P:protein secretion"/>
    <property type="evidence" value="ECO:0000315"/>
    <property type="project" value="dictyBase"/>
</dbReference>
<dbReference type="GO" id="GO:0010468">
    <property type="term" value="P:regulation of gene expression"/>
    <property type="evidence" value="ECO:0000315"/>
    <property type="project" value="dictyBase"/>
</dbReference>
<dbReference type="GO" id="GO:0030587">
    <property type="term" value="P:sorocarp development"/>
    <property type="evidence" value="ECO:0000315"/>
    <property type="project" value="dictyBase"/>
</dbReference>
<dbReference type="CDD" id="cd14686">
    <property type="entry name" value="bZIP"/>
    <property type="match status" value="1"/>
</dbReference>
<dbReference type="InterPro" id="IPR025969">
    <property type="entry name" value="ABA_GPCR_dom"/>
</dbReference>
<dbReference type="InterPro" id="IPR022535">
    <property type="entry name" value="Golgi_pH-regulator_cons_dom"/>
</dbReference>
<dbReference type="InterPro" id="IPR015672">
    <property type="entry name" value="GPHR/GTG"/>
</dbReference>
<dbReference type="PANTHER" id="PTHR15948">
    <property type="entry name" value="G-PROTEIN COUPLED RECEPTOR 89-RELATED"/>
    <property type="match status" value="1"/>
</dbReference>
<dbReference type="PANTHER" id="PTHR15948:SF0">
    <property type="entry name" value="GOLGI PH REGULATOR A-RELATED"/>
    <property type="match status" value="1"/>
</dbReference>
<dbReference type="Pfam" id="PF12430">
    <property type="entry name" value="ABA_GPCR"/>
    <property type="match status" value="1"/>
</dbReference>
<dbReference type="Pfam" id="PF12537">
    <property type="entry name" value="GPHR_N"/>
    <property type="match status" value="1"/>
</dbReference>
<proteinExistence type="inferred from homology"/>
<reference key="1">
    <citation type="journal article" date="2005" name="Nature">
        <title>The genome of the social amoeba Dictyostelium discoideum.</title>
        <authorList>
            <person name="Eichinger L."/>
            <person name="Pachebat J.A."/>
            <person name="Gloeckner G."/>
            <person name="Rajandream M.A."/>
            <person name="Sucgang R."/>
            <person name="Berriman M."/>
            <person name="Song J."/>
            <person name="Olsen R."/>
            <person name="Szafranski K."/>
            <person name="Xu Q."/>
            <person name="Tunggal B."/>
            <person name="Kummerfeld S."/>
            <person name="Madera M."/>
            <person name="Konfortov B.A."/>
            <person name="Rivero F."/>
            <person name="Bankier A.T."/>
            <person name="Lehmann R."/>
            <person name="Hamlin N."/>
            <person name="Davies R."/>
            <person name="Gaudet P."/>
            <person name="Fey P."/>
            <person name="Pilcher K."/>
            <person name="Chen G."/>
            <person name="Saunders D."/>
            <person name="Sodergren E.J."/>
            <person name="Davis P."/>
            <person name="Kerhornou A."/>
            <person name="Nie X."/>
            <person name="Hall N."/>
            <person name="Anjard C."/>
            <person name="Hemphill L."/>
            <person name="Bason N."/>
            <person name="Farbrother P."/>
            <person name="Desany B."/>
            <person name="Just E."/>
            <person name="Morio T."/>
            <person name="Rost R."/>
            <person name="Churcher C.M."/>
            <person name="Cooper J."/>
            <person name="Haydock S."/>
            <person name="van Driessche N."/>
            <person name="Cronin A."/>
            <person name="Goodhead I."/>
            <person name="Muzny D.M."/>
            <person name="Mourier T."/>
            <person name="Pain A."/>
            <person name="Lu M."/>
            <person name="Harper D."/>
            <person name="Lindsay R."/>
            <person name="Hauser H."/>
            <person name="James K.D."/>
            <person name="Quiles M."/>
            <person name="Madan Babu M."/>
            <person name="Saito T."/>
            <person name="Buchrieser C."/>
            <person name="Wardroper A."/>
            <person name="Felder M."/>
            <person name="Thangavelu M."/>
            <person name="Johnson D."/>
            <person name="Knights A."/>
            <person name="Loulseged H."/>
            <person name="Mungall K.L."/>
            <person name="Oliver K."/>
            <person name="Price C."/>
            <person name="Quail M.A."/>
            <person name="Urushihara H."/>
            <person name="Hernandez J."/>
            <person name="Rabbinowitsch E."/>
            <person name="Steffen D."/>
            <person name="Sanders M."/>
            <person name="Ma J."/>
            <person name="Kohara Y."/>
            <person name="Sharp S."/>
            <person name="Simmonds M.N."/>
            <person name="Spiegler S."/>
            <person name="Tivey A."/>
            <person name="Sugano S."/>
            <person name="White B."/>
            <person name="Walker D."/>
            <person name="Woodward J.R."/>
            <person name="Winckler T."/>
            <person name="Tanaka Y."/>
            <person name="Shaulsky G."/>
            <person name="Schleicher M."/>
            <person name="Weinstock G.M."/>
            <person name="Rosenthal A."/>
            <person name="Cox E.C."/>
            <person name="Chisholm R.L."/>
            <person name="Gibbs R.A."/>
            <person name="Loomis W.F."/>
            <person name="Platzer M."/>
            <person name="Kay R.R."/>
            <person name="Williams J.G."/>
            <person name="Dear P.H."/>
            <person name="Noegel A.A."/>
            <person name="Barrell B.G."/>
            <person name="Kuspa A."/>
        </authorList>
    </citation>
    <scope>NUCLEOTIDE SEQUENCE [LARGE SCALE GENOMIC DNA]</scope>
    <source>
        <strain>AX4</strain>
    </source>
</reference>
<keyword id="KW-0325">Glycoprotein</keyword>
<keyword id="KW-0472">Membrane</keyword>
<keyword id="KW-1185">Reference proteome</keyword>
<keyword id="KW-0812">Transmembrane</keyword>
<keyword id="KW-1133">Transmembrane helix</keyword>
<gene>
    <name type="primary">gpr89</name>
    <name type="synonym">gphr</name>
    <name type="ORF">DDB_G0283855</name>
</gene>
<comment type="subcellular location">
    <subcellularLocation>
        <location evidence="3">Membrane</location>
        <topology>Multi-pass membrane protein</topology>
    </subcellularLocation>
</comment>
<comment type="similarity">
    <text evidence="3">Belongs to the Golgi pH regulator (TC 1.A.38) family.</text>
</comment>
<name>GPHR_DICDI</name>